<protein>
    <recommendedName>
        <fullName evidence="8">STE20-related kinase adapter protein strd-1</fullName>
    </recommendedName>
    <alternativeName>
        <fullName evidence="10">STRAD STE20-related adapter homolog</fullName>
    </alternativeName>
</protein>
<proteinExistence type="evidence at protein level"/>
<reference evidence="9" key="1">
    <citation type="journal article" date="1998" name="Science">
        <title>Genome sequence of the nematode C. elegans: a platform for investigating biology.</title>
        <authorList>
            <consortium name="The C. elegans sequencing consortium"/>
        </authorList>
    </citation>
    <scope>NUCLEOTIDE SEQUENCE [LARGE SCALE GENOMIC DNA]</scope>
    <source>
        <strain evidence="9">Bristol N2</strain>
    </source>
</reference>
<reference evidence="7" key="2">
    <citation type="journal article" date="2010" name="Development">
        <title>C. elegans STRADalpha and SAD cooperatively regulate neuronal polarity and synaptic organization.</title>
        <authorList>
            <person name="Kim J.S."/>
            <person name="Hung W."/>
            <person name="Narbonne P."/>
            <person name="Roy R."/>
            <person name="Zhen M."/>
        </authorList>
    </citation>
    <scope>FUNCTION</scope>
    <scope>INTERACTION WITH SAD-1</scope>
    <scope>SUBCELLULAR LOCATION</scope>
    <scope>TISSUE SPECIFICITY</scope>
    <scope>DOMAIN</scope>
    <scope>DISRUPTION PHENOTYPE</scope>
    <scope>MUTAGENESIS OF ASP-175</scope>
</reference>
<reference evidence="7" key="3">
    <citation type="journal article" date="2010" name="Development">
        <title>Differential requirements for STRAD in LKB1-dependent functions in C. elegans.</title>
        <authorList>
            <person name="Narbonne P."/>
            <person name="Hyenne V."/>
            <person name="Li S."/>
            <person name="Labbe J.C."/>
            <person name="Roy R."/>
        </authorList>
    </citation>
    <scope>FUNCTION</scope>
    <scope>INTERACTION WITH PAR-4</scope>
    <scope>SUBCELLULAR LOCATION</scope>
    <scope>TISSUE SPECIFICITY</scope>
    <scope>DEVELOPMENTAL STAGE</scope>
    <scope>DISRUPTION PHENOTYPE</scope>
    <scope>MUTAGENESIS OF GLY-243</scope>
</reference>
<reference evidence="7" key="4">
    <citation type="journal article" date="2012" name="Nature">
        <title>Programmed elimination of cells by caspase-independent cell extrusion in C. elegans.</title>
        <authorList>
            <person name="Denning D.P."/>
            <person name="Hatch V."/>
            <person name="Horvitz H.R."/>
        </authorList>
    </citation>
    <scope>FUNCTION</scope>
    <scope>DISRUPTION PHENOTYPE</scope>
</reference>
<reference evidence="7" key="5">
    <citation type="journal article" date="2013" name="Genetics">
        <title>Caenorhabditis elegans PIG-1/MELK acts in a conserved PAR-4/LKB1 polarity pathway to promote asymmetric neuroblast divisions.</title>
        <authorList>
            <person name="Chien S.C."/>
            <person name="Brinkmann E.M."/>
            <person name="Teuliere J."/>
            <person name="Garriga G."/>
        </authorList>
    </citation>
    <scope>FUNCTION</scope>
    <scope>DISRUPTION PHENOTYPE</scope>
</reference>
<organism evidence="9">
    <name type="scientific">Caenorhabditis elegans</name>
    <dbReference type="NCBI Taxonomy" id="6239"/>
    <lineage>
        <taxon>Eukaryota</taxon>
        <taxon>Metazoa</taxon>
        <taxon>Ecdysozoa</taxon>
        <taxon>Nematoda</taxon>
        <taxon>Chromadorea</taxon>
        <taxon>Rhabditida</taxon>
        <taxon>Rhabditina</taxon>
        <taxon>Rhabditomorpha</taxon>
        <taxon>Rhabditoidea</taxon>
        <taxon>Rhabditidae</taxon>
        <taxon>Peloderinae</taxon>
        <taxon>Caenorhabditis</taxon>
    </lineage>
</organism>
<accession>G5ECN5</accession>
<keyword id="KW-0067">ATP-binding</keyword>
<keyword id="KW-0966">Cell projection</keyword>
<keyword id="KW-0963">Cytoplasm</keyword>
<keyword id="KW-0524">Neurogenesis</keyword>
<keyword id="KW-0547">Nucleotide-binding</keyword>
<keyword id="KW-0539">Nucleus</keyword>
<keyword id="KW-1185">Reference proteome</keyword>
<keyword id="KW-0770">Synapse</keyword>
<dbReference type="EMBL" id="BX284603">
    <property type="protein sequence ID" value="CAB16482.1"/>
    <property type="molecule type" value="Genomic_DNA"/>
</dbReference>
<dbReference type="PIR" id="T26977">
    <property type="entry name" value="T26977"/>
</dbReference>
<dbReference type="RefSeq" id="NP_001022902.1">
    <property type="nucleotide sequence ID" value="NM_001027731.6"/>
</dbReference>
<dbReference type="SMR" id="G5ECN5"/>
<dbReference type="FunCoup" id="G5ECN5">
    <property type="interactions" value="1891"/>
</dbReference>
<dbReference type="IntAct" id="G5ECN5">
    <property type="interactions" value="1"/>
</dbReference>
<dbReference type="STRING" id="6239.Y52D3.1a.1"/>
<dbReference type="PaxDb" id="6239-Y52D3.1a.1"/>
<dbReference type="PeptideAtlas" id="G5ECN5"/>
<dbReference type="EnsemblMetazoa" id="Y52D3.1a.1">
    <property type="protein sequence ID" value="Y52D3.1a.1"/>
    <property type="gene ID" value="WBGene00013132"/>
</dbReference>
<dbReference type="GeneID" id="176526"/>
<dbReference type="KEGG" id="cel:CELE_Y52D3.1"/>
<dbReference type="AGR" id="WB:WBGene00013132"/>
<dbReference type="CTD" id="176526"/>
<dbReference type="WormBase" id="Y52D3.1a">
    <property type="protein sequence ID" value="CE19223"/>
    <property type="gene ID" value="WBGene00013132"/>
    <property type="gene designation" value="strd-1"/>
</dbReference>
<dbReference type="eggNOG" id="KOG0582">
    <property type="taxonomic scope" value="Eukaryota"/>
</dbReference>
<dbReference type="GeneTree" id="ENSGT00940000168867"/>
<dbReference type="HOGENOM" id="CLU_000288_63_23_1"/>
<dbReference type="InParanoid" id="G5ECN5"/>
<dbReference type="OMA" id="INGVMPF"/>
<dbReference type="OrthoDB" id="840771at2759"/>
<dbReference type="PhylomeDB" id="G5ECN5"/>
<dbReference type="Reactome" id="R-CEL-168638">
    <property type="pathway name" value="NOD1/2 Signaling Pathway"/>
</dbReference>
<dbReference type="Reactome" id="R-CEL-2559580">
    <property type="pathway name" value="Oxidative Stress Induced Senescence"/>
</dbReference>
<dbReference type="Reactome" id="R-CEL-450302">
    <property type="pathway name" value="activated TAK1 mediates p38 MAPK activation"/>
</dbReference>
<dbReference type="Reactome" id="R-CEL-6811555">
    <property type="pathway name" value="PI5P Regulates TP53 Acetylation"/>
</dbReference>
<dbReference type="Reactome" id="R-CEL-9833482">
    <property type="pathway name" value="PKR-mediated signaling"/>
</dbReference>
<dbReference type="PRO" id="PR:G5ECN5"/>
<dbReference type="Proteomes" id="UP000001940">
    <property type="component" value="Chromosome III"/>
</dbReference>
<dbReference type="Bgee" id="WBGene00013132">
    <property type="expression patterns" value="Expressed in germ line (C elegans) and 4 other cell types or tissues"/>
</dbReference>
<dbReference type="GO" id="GO:0030424">
    <property type="term" value="C:axon"/>
    <property type="evidence" value="ECO:0007669"/>
    <property type="project" value="UniProtKB-SubCell"/>
</dbReference>
<dbReference type="GO" id="GO:0044297">
    <property type="term" value="C:cell body"/>
    <property type="evidence" value="ECO:0000314"/>
    <property type="project" value="WormBase"/>
</dbReference>
<dbReference type="GO" id="GO:0005938">
    <property type="term" value="C:cell cortex"/>
    <property type="evidence" value="ECO:0000314"/>
    <property type="project" value="WormBase"/>
</dbReference>
<dbReference type="GO" id="GO:0030425">
    <property type="term" value="C:dendrite"/>
    <property type="evidence" value="ECO:0007669"/>
    <property type="project" value="UniProtKB-SubCell"/>
</dbReference>
<dbReference type="GO" id="GO:0043005">
    <property type="term" value="C:neuron projection"/>
    <property type="evidence" value="ECO:0000314"/>
    <property type="project" value="WormBase"/>
</dbReference>
<dbReference type="GO" id="GO:0005634">
    <property type="term" value="C:nucleus"/>
    <property type="evidence" value="ECO:0000314"/>
    <property type="project" value="WormBase"/>
</dbReference>
<dbReference type="GO" id="GO:0043204">
    <property type="term" value="C:perikaryon"/>
    <property type="evidence" value="ECO:0007669"/>
    <property type="project" value="UniProtKB-SubCell"/>
</dbReference>
<dbReference type="GO" id="GO:0045202">
    <property type="term" value="C:synapse"/>
    <property type="evidence" value="ECO:0000314"/>
    <property type="project" value="WormBase"/>
</dbReference>
<dbReference type="GO" id="GO:0005524">
    <property type="term" value="F:ATP binding"/>
    <property type="evidence" value="ECO:0007669"/>
    <property type="project" value="UniProtKB-KW"/>
</dbReference>
<dbReference type="GO" id="GO:0004708">
    <property type="term" value="F:MAP kinase kinase activity"/>
    <property type="evidence" value="ECO:0000318"/>
    <property type="project" value="GO_Central"/>
</dbReference>
<dbReference type="GO" id="GO:0019901">
    <property type="term" value="F:protein kinase binding"/>
    <property type="evidence" value="ECO:0000353"/>
    <property type="project" value="WormBase"/>
</dbReference>
<dbReference type="GO" id="GO:0043539">
    <property type="term" value="F:protein serine/threonine kinase activator activity"/>
    <property type="evidence" value="ECO:0000315"/>
    <property type="project" value="WormBase"/>
</dbReference>
<dbReference type="GO" id="GO:0055059">
    <property type="term" value="P:asymmetric neuroblast division"/>
    <property type="evidence" value="ECO:0000315"/>
    <property type="project" value="WormBase"/>
</dbReference>
<dbReference type="GO" id="GO:0007163">
    <property type="term" value="P:establishment or maintenance of cell polarity"/>
    <property type="evidence" value="ECO:0000315"/>
    <property type="project" value="WormBase"/>
</dbReference>
<dbReference type="GO" id="GO:0043055">
    <property type="term" value="P:maintenance of dauer"/>
    <property type="evidence" value="ECO:0000316"/>
    <property type="project" value="WormBase"/>
</dbReference>
<dbReference type="GO" id="GO:0000165">
    <property type="term" value="P:MAPK cascade"/>
    <property type="evidence" value="ECO:0000318"/>
    <property type="project" value="GO_Central"/>
</dbReference>
<dbReference type="GO" id="GO:1904746">
    <property type="term" value="P:negative regulation of apoptotic process involved in development"/>
    <property type="evidence" value="ECO:0000316"/>
    <property type="project" value="UniProtKB"/>
</dbReference>
<dbReference type="GO" id="GO:0010800">
    <property type="term" value="P:positive regulation of peptidyl-threonine phosphorylation"/>
    <property type="evidence" value="ECO:0000315"/>
    <property type="project" value="WormBase"/>
</dbReference>
<dbReference type="GO" id="GO:0035418">
    <property type="term" value="P:protein localization to synapse"/>
    <property type="evidence" value="ECO:0000315"/>
    <property type="project" value="WormBase"/>
</dbReference>
<dbReference type="GO" id="GO:0050808">
    <property type="term" value="P:synapse organization"/>
    <property type="evidence" value="ECO:0000315"/>
    <property type="project" value="WormBase"/>
</dbReference>
<dbReference type="Gene3D" id="1.10.510.10">
    <property type="entry name" value="Transferase(Phosphotransferase) domain 1"/>
    <property type="match status" value="1"/>
</dbReference>
<dbReference type="InterPro" id="IPR011009">
    <property type="entry name" value="Kinase-like_dom_sf"/>
</dbReference>
<dbReference type="InterPro" id="IPR000719">
    <property type="entry name" value="Prot_kinase_dom"/>
</dbReference>
<dbReference type="InterPro" id="IPR047173">
    <property type="entry name" value="STRAD_A/B-like"/>
</dbReference>
<dbReference type="PANTHER" id="PTHR48014">
    <property type="entry name" value="SERINE/THREONINE-PROTEIN KINASE FRAY2"/>
    <property type="match status" value="1"/>
</dbReference>
<dbReference type="PANTHER" id="PTHR48014:SF21">
    <property type="entry name" value="SERINE_THREONINE-PROTEIN KINASE FRAY2"/>
    <property type="match status" value="1"/>
</dbReference>
<dbReference type="Pfam" id="PF00069">
    <property type="entry name" value="Pkinase"/>
    <property type="match status" value="1"/>
</dbReference>
<dbReference type="SUPFAM" id="SSF56112">
    <property type="entry name" value="Protein kinase-like (PK-like)"/>
    <property type="match status" value="1"/>
</dbReference>
<dbReference type="PROSITE" id="PS50011">
    <property type="entry name" value="PROTEIN_KINASE_DOM"/>
    <property type="match status" value="1"/>
</dbReference>
<gene>
    <name evidence="10" type="primary">strd-1</name>
    <name evidence="10" type="ORF">Y52D3.1</name>
</gene>
<evidence type="ECO:0000255" key="1">
    <source>
        <dbReference type="PROSITE-ProRule" id="PRU00159"/>
    </source>
</evidence>
<evidence type="ECO:0000269" key="2">
    <source>
    </source>
</evidence>
<evidence type="ECO:0000269" key="3">
    <source>
    </source>
</evidence>
<evidence type="ECO:0000269" key="4">
    <source>
    </source>
</evidence>
<evidence type="ECO:0000269" key="5">
    <source>
    </source>
</evidence>
<evidence type="ECO:0000303" key="6">
    <source>
    </source>
</evidence>
<evidence type="ECO:0000305" key="7"/>
<evidence type="ECO:0000305" key="8">
    <source>
    </source>
</evidence>
<evidence type="ECO:0000312" key="9">
    <source>
        <dbReference type="Proteomes" id="UP000001940"/>
    </source>
</evidence>
<evidence type="ECO:0000312" key="10">
    <source>
        <dbReference type="WormBase" id="Y52D3.1a"/>
    </source>
</evidence>
<sequence length="388" mass="44275">MADTTILDTTCSSTLAANVEFSHATDSAIGISLKNATITEAEGVPNLKETGYDCVRYMGTCNGGQIYLGRERKKLKDYVAIKKFAIDDVDDYAAIAKESSNLRLMHHPNIIELCECFVYERSIYQITPAMNLGSLFDIVFEYMKWGINEKSAAAITRQLLDALSYLHQRRYIHRDLKPKHILIDSSGNVKLSGFRFMIELNHHLDCVFEFDAHLQNQLYYLAPEVLAQNIHGYTSKSDIYMLGISICEAINGVMPFGELEPLEMLHRKLNGQVPRPVDMISLKDDQKMGLDISHRPQEHLTRRFSKEMHEFIANCLDYDPQQRGSASDLKSSAWLGSKIHKNLGPVDVRQELNLDYAHFDLSLWEQEPLIPMEPDQKYEIVFDYSPIS</sequence>
<comment type="function">
    <text evidence="2 3 4 5">Pseudokinase which may act as an adapter for kinases sad-1 and par-4 and thereby is involved in several developmental processes. Regulates cell-autonomously both neuronal polarity and synaptic organization when bound to sad-1. Required for sad-1 localization to synapses (PubMed:20023164). Required to establish germline stem cell (GSC) quiescence during dauer development, to promote cell shedding during embryogenesis and to control asymmetric cell division of the Q.p neuroblast lineage, probably when bound to par-4 (PubMed:20110331, PubMed:22801495, PubMed:23267054). May be involved in maintaining the integrity of the early embryonic cortex when bound to par-4 (PubMed:20110331).</text>
</comment>
<comment type="subunit">
    <text evidence="2 3">Interacts with sad-1 (PubMed:20023164). Interacts with par-4 (PubMed:20110331).</text>
</comment>
<comment type="subcellular location">
    <subcellularLocation>
        <location evidence="2">Perikaryon</location>
    </subcellularLocation>
    <subcellularLocation>
        <location evidence="2">Nucleus</location>
    </subcellularLocation>
    <subcellularLocation>
        <location evidence="2">Cell projection</location>
        <location evidence="2">Dendrite</location>
    </subcellularLocation>
    <subcellularLocation>
        <location evidence="2">Cell projection</location>
        <location evidence="2">Axon</location>
    </subcellularLocation>
    <subcellularLocation>
        <location evidence="2">Synapse</location>
    </subcellularLocation>
    <subcellularLocation>
        <location evidence="3">Cytoplasm</location>
        <location evidence="3">Cell cortex</location>
    </subcellularLocation>
    <subcellularLocation>
        <location evidence="3">Cytoplasm</location>
    </subcellularLocation>
    <text evidence="2 3">Localizes in punctate structures along the neurites of GABAergic motoneurons. Co-localizes with sad-1 at synapses (PubMed:20023164). Co-localizes with par-4 at the cell cortex of the early embryo. Cell cortex localization is regulated by par-4 (PubMed:20110331).</text>
</comment>
<comment type="tissue specificity">
    <text evidence="2 3">Expressed in nervous system, pharynx and excretory canal (PubMed:20023164). Expressed in germline (PubMed:20110331).</text>
</comment>
<comment type="developmental stage">
    <text evidence="3">Expressed in embryo.</text>
</comment>
<comment type="domain">
    <text evidence="6">The protein kinase domain is predicted to be catalytically inactive.</text>
</comment>
<comment type="disruption phenotype">
    <text evidence="2 3 4 5">Ectopic expression of pre-synaptic reporter snb-1-GFP in ASI sensory neurons. Along the dorsal nerve cord of DD motoneurons, pre-synaptic puncta appear diffuse or smaller and synapse localization of sad-1 is disrupted. Germline hyperplasia and loss of aak-2 phosphorylation during dauer development (PubMed:20110331). During neuroblast division, daughter cell size asymmetry in the Q.p division is defective (PubMed:23267054). Animals are slightly stiff but with active locomotion (PubMed:20023164). In par-4 (it33) mutants, causes embryonic lethality (PubMed:20023164). In ced-3 (n3692) mutants, impaired cell shedding during embryogenesis which results in the generation of an ectopic excretory cell (PubMed:22801495). In addition, these double mutants produce additional AVM or PVM mechanosensory neurons (PubMed:23267054).</text>
</comment>
<comment type="similarity">
    <text evidence="7">Belongs to the protein kinase superfamily. STE Ser/Thr protein kinase family. STE20 subfamily.</text>
</comment>
<name>STRD1_CAEEL</name>
<feature type="chain" id="PRO_0000433877" description="STE20-related kinase adapter protein strd-1" evidence="7">
    <location>
        <begin position="1"/>
        <end position="388"/>
    </location>
</feature>
<feature type="domain" description="Protein kinase" evidence="1">
    <location>
        <begin position="52"/>
        <end position="335"/>
    </location>
</feature>
<feature type="binding site" evidence="1">
    <location>
        <begin position="58"/>
        <end position="66"/>
    </location>
    <ligand>
        <name>ATP</name>
        <dbReference type="ChEBI" id="CHEBI:30616"/>
    </ligand>
</feature>
<feature type="binding site" evidence="1">
    <location>
        <position position="82"/>
    </location>
    <ligand>
        <name>ATP</name>
        <dbReference type="ChEBI" id="CHEBI:30616"/>
    </ligand>
</feature>
<feature type="mutagenesis site" description="No defect in neuronal polarity and synaptic organization." evidence="2">
    <original>D</original>
    <variation>A</variation>
    <location>
        <position position="175"/>
    </location>
</feature>
<feature type="mutagenesis site" description="In rr92; germline hyperplasia during dauer development." evidence="3">
    <original>G</original>
    <variation>S</variation>
    <location>
        <position position="243"/>
    </location>
</feature>